<organism>
    <name type="scientific">Staphylococcus aureus (strain USA300)</name>
    <dbReference type="NCBI Taxonomy" id="367830"/>
    <lineage>
        <taxon>Bacteria</taxon>
        <taxon>Bacillati</taxon>
        <taxon>Bacillota</taxon>
        <taxon>Bacilli</taxon>
        <taxon>Bacillales</taxon>
        <taxon>Staphylococcaceae</taxon>
        <taxon>Staphylococcus</taxon>
    </lineage>
</organism>
<protein>
    <recommendedName>
        <fullName evidence="1">Large ribosomal subunit protein bL19</fullName>
    </recommendedName>
    <alternativeName>
        <fullName evidence="2">50S ribosomal protein L19</fullName>
    </alternativeName>
</protein>
<evidence type="ECO:0000255" key="1">
    <source>
        <dbReference type="HAMAP-Rule" id="MF_00402"/>
    </source>
</evidence>
<evidence type="ECO:0000305" key="2"/>
<dbReference type="EMBL" id="CP000255">
    <property type="protein sequence ID" value="ABD22180.1"/>
    <property type="molecule type" value="Genomic_DNA"/>
</dbReference>
<dbReference type="RefSeq" id="WP_000181404.1">
    <property type="nucleotide sequence ID" value="NZ_CP027476.1"/>
</dbReference>
<dbReference type="SMR" id="Q2FHJ7"/>
<dbReference type="GeneID" id="98345556"/>
<dbReference type="KEGG" id="saa:SAUSA300_1134"/>
<dbReference type="HOGENOM" id="CLU_103507_2_1_9"/>
<dbReference type="Proteomes" id="UP000001939">
    <property type="component" value="Chromosome"/>
</dbReference>
<dbReference type="GO" id="GO:0022625">
    <property type="term" value="C:cytosolic large ribosomal subunit"/>
    <property type="evidence" value="ECO:0007669"/>
    <property type="project" value="TreeGrafter"/>
</dbReference>
<dbReference type="GO" id="GO:0003735">
    <property type="term" value="F:structural constituent of ribosome"/>
    <property type="evidence" value="ECO:0007669"/>
    <property type="project" value="InterPro"/>
</dbReference>
<dbReference type="GO" id="GO:0006412">
    <property type="term" value="P:translation"/>
    <property type="evidence" value="ECO:0007669"/>
    <property type="project" value="UniProtKB-UniRule"/>
</dbReference>
<dbReference type="FunFam" id="2.30.30.790:FF:000001">
    <property type="entry name" value="50S ribosomal protein L19"/>
    <property type="match status" value="1"/>
</dbReference>
<dbReference type="Gene3D" id="2.30.30.790">
    <property type="match status" value="1"/>
</dbReference>
<dbReference type="HAMAP" id="MF_00402">
    <property type="entry name" value="Ribosomal_bL19"/>
    <property type="match status" value="1"/>
</dbReference>
<dbReference type="InterPro" id="IPR001857">
    <property type="entry name" value="Ribosomal_bL19"/>
</dbReference>
<dbReference type="InterPro" id="IPR018257">
    <property type="entry name" value="Ribosomal_bL19_CS"/>
</dbReference>
<dbReference type="InterPro" id="IPR038657">
    <property type="entry name" value="Ribosomal_bL19_sf"/>
</dbReference>
<dbReference type="InterPro" id="IPR008991">
    <property type="entry name" value="Translation_prot_SH3-like_sf"/>
</dbReference>
<dbReference type="NCBIfam" id="TIGR01024">
    <property type="entry name" value="rplS_bact"/>
    <property type="match status" value="1"/>
</dbReference>
<dbReference type="PANTHER" id="PTHR15680:SF9">
    <property type="entry name" value="LARGE RIBOSOMAL SUBUNIT PROTEIN BL19M"/>
    <property type="match status" value="1"/>
</dbReference>
<dbReference type="PANTHER" id="PTHR15680">
    <property type="entry name" value="RIBOSOMAL PROTEIN L19"/>
    <property type="match status" value="1"/>
</dbReference>
<dbReference type="Pfam" id="PF01245">
    <property type="entry name" value="Ribosomal_L19"/>
    <property type="match status" value="1"/>
</dbReference>
<dbReference type="PIRSF" id="PIRSF002191">
    <property type="entry name" value="Ribosomal_L19"/>
    <property type="match status" value="1"/>
</dbReference>
<dbReference type="PRINTS" id="PR00061">
    <property type="entry name" value="RIBOSOMALL19"/>
</dbReference>
<dbReference type="SUPFAM" id="SSF50104">
    <property type="entry name" value="Translation proteins SH3-like domain"/>
    <property type="match status" value="1"/>
</dbReference>
<dbReference type="PROSITE" id="PS01015">
    <property type="entry name" value="RIBOSOMAL_L19"/>
    <property type="match status" value="1"/>
</dbReference>
<feature type="chain" id="PRO_0000252547" description="Large ribosomal subunit protein bL19">
    <location>
        <begin position="1"/>
        <end position="116"/>
    </location>
</feature>
<keyword id="KW-0687">Ribonucleoprotein</keyword>
<keyword id="KW-0689">Ribosomal protein</keyword>
<comment type="function">
    <text evidence="1">This protein is located at the 30S-50S ribosomal subunit interface and may play a role in the structure and function of the aminoacyl-tRNA binding site.</text>
</comment>
<comment type="similarity">
    <text evidence="1">Belongs to the bacterial ribosomal protein bL19 family.</text>
</comment>
<proteinExistence type="inferred from homology"/>
<sequence>MTNHKLIEAVTKSQLRTDLPSFRPGDTLRVHVRIIEGTRERIQVFEGVVIKRRGGGVSETFTVRKISSGVGVERTFPLHTPKIEKIEVKRRGKVRRAKLYYLRSLRGKAARIQEIR</sequence>
<gene>
    <name evidence="1" type="primary">rplS</name>
    <name type="ordered locus">SAUSA300_1134</name>
</gene>
<reference key="1">
    <citation type="journal article" date="2006" name="Lancet">
        <title>Complete genome sequence of USA300, an epidemic clone of community-acquired meticillin-resistant Staphylococcus aureus.</title>
        <authorList>
            <person name="Diep B.A."/>
            <person name="Gill S.R."/>
            <person name="Chang R.F."/>
            <person name="Phan T.H."/>
            <person name="Chen J.H."/>
            <person name="Davidson M.G."/>
            <person name="Lin F."/>
            <person name="Lin J."/>
            <person name="Carleton H.A."/>
            <person name="Mongodin E.F."/>
            <person name="Sensabaugh G.F."/>
            <person name="Perdreau-Remington F."/>
        </authorList>
    </citation>
    <scope>NUCLEOTIDE SEQUENCE [LARGE SCALE GENOMIC DNA]</scope>
    <source>
        <strain>USA300</strain>
    </source>
</reference>
<accession>Q2FHJ7</accession>
<name>RL19_STAA3</name>